<reference key="1">
    <citation type="submission" date="2007-07" db="EMBL/GenBank/DDBJ databases">
        <title>Complete genome sequence of Campylobacter hominis ATCC BAA-381, a commensal isolated from the human gastrointestinal tract.</title>
        <authorList>
            <person name="Fouts D.E."/>
            <person name="Mongodin E.F."/>
            <person name="Puiu D."/>
            <person name="Sebastian Y."/>
            <person name="Miller W.G."/>
            <person name="Mandrell R.E."/>
            <person name="Nelson K.E."/>
        </authorList>
    </citation>
    <scope>NUCLEOTIDE SEQUENCE [LARGE SCALE GENOMIC DNA]</scope>
    <source>
        <strain>ATCC BAA-381 / DSM 21671 / CCUG 45161 / LMG 19568 / NCTC 13146 / CH001A</strain>
    </source>
</reference>
<name>NUOH_CAMHC</name>
<comment type="function">
    <text evidence="1">NDH-1 shuttles electrons from NADH, via FMN and iron-sulfur (Fe-S) centers, to quinones in the respiratory chain. The immediate electron acceptor for the enzyme in this species is believed to be ubiquinone. Couples the redox reaction to proton translocation (for every two electrons transferred, four hydrogen ions are translocated across the cytoplasmic membrane), and thus conserves the redox energy in a proton gradient. This subunit may bind ubiquinone.</text>
</comment>
<comment type="catalytic activity">
    <reaction evidence="1">
        <text>a quinone + NADH + 5 H(+)(in) = a quinol + NAD(+) + 4 H(+)(out)</text>
        <dbReference type="Rhea" id="RHEA:57888"/>
        <dbReference type="ChEBI" id="CHEBI:15378"/>
        <dbReference type="ChEBI" id="CHEBI:24646"/>
        <dbReference type="ChEBI" id="CHEBI:57540"/>
        <dbReference type="ChEBI" id="CHEBI:57945"/>
        <dbReference type="ChEBI" id="CHEBI:132124"/>
    </reaction>
</comment>
<comment type="subunit">
    <text evidence="1">NDH-1 is composed of 14 different subunits. Subunits NuoA, H, J, K, L, M, N constitute the membrane sector of the complex.</text>
</comment>
<comment type="subcellular location">
    <subcellularLocation>
        <location evidence="1">Cell inner membrane</location>
        <topology evidence="1">Multi-pass membrane protein</topology>
    </subcellularLocation>
</comment>
<comment type="similarity">
    <text evidence="1">Belongs to the complex I subunit 1 family.</text>
</comment>
<gene>
    <name evidence="1" type="primary">nuoH</name>
    <name type="ordered locus">CHAB381_0188</name>
</gene>
<sequence length="331" mass="36647">MSDITFFIVETIIKAVVILSVIATLAGLGTYAERKVLAYMQRRVGPWMVGPAGVLQIVADMIKLFTKEDTMPSGANRFIFLIAPIISASCAFVAMSVIPFLPEFEIFGHVVRPILSDVNIGILFLLSVSGTCVYGTLIGGLASYNKWGVIGSARSVLQLISFEIVNGLSLIPVIMMVGSLSLIDIVHEQNNGITSWFLIKQPVCFVLFTIAAFIECNRTPLCLTENETELVAGCGTAYSGMRWGMFFIGEYANMITYSIVISLIFLGGFNSFWFIPGSLMIFLKASFIFFFMLWTRAAWPHLRPDQLMELCWKICMPIALICIFVTAFVII</sequence>
<evidence type="ECO:0000255" key="1">
    <source>
        <dbReference type="HAMAP-Rule" id="MF_01350"/>
    </source>
</evidence>
<dbReference type="EC" id="7.1.1.-" evidence="1"/>
<dbReference type="EMBL" id="CP000776">
    <property type="protein sequence ID" value="ABS51133.1"/>
    <property type="molecule type" value="Genomic_DNA"/>
</dbReference>
<dbReference type="RefSeq" id="WP_012108077.1">
    <property type="nucleotide sequence ID" value="NC_009714.1"/>
</dbReference>
<dbReference type="SMR" id="A7HZV5"/>
<dbReference type="STRING" id="360107.CHAB381_0188"/>
<dbReference type="KEGG" id="cha:CHAB381_0188"/>
<dbReference type="eggNOG" id="COG1005">
    <property type="taxonomic scope" value="Bacteria"/>
</dbReference>
<dbReference type="HOGENOM" id="CLU_015134_0_1_7"/>
<dbReference type="OrthoDB" id="9803734at2"/>
<dbReference type="Proteomes" id="UP000002407">
    <property type="component" value="Chromosome"/>
</dbReference>
<dbReference type="GO" id="GO:0005886">
    <property type="term" value="C:plasma membrane"/>
    <property type="evidence" value="ECO:0007669"/>
    <property type="project" value="UniProtKB-SubCell"/>
</dbReference>
<dbReference type="GO" id="GO:0003954">
    <property type="term" value="F:NADH dehydrogenase activity"/>
    <property type="evidence" value="ECO:0007669"/>
    <property type="project" value="TreeGrafter"/>
</dbReference>
<dbReference type="GO" id="GO:0016655">
    <property type="term" value="F:oxidoreductase activity, acting on NAD(P)H, quinone or similar compound as acceptor"/>
    <property type="evidence" value="ECO:0007669"/>
    <property type="project" value="UniProtKB-UniRule"/>
</dbReference>
<dbReference type="GO" id="GO:0048038">
    <property type="term" value="F:quinone binding"/>
    <property type="evidence" value="ECO:0007669"/>
    <property type="project" value="UniProtKB-KW"/>
</dbReference>
<dbReference type="GO" id="GO:0009060">
    <property type="term" value="P:aerobic respiration"/>
    <property type="evidence" value="ECO:0007669"/>
    <property type="project" value="TreeGrafter"/>
</dbReference>
<dbReference type="HAMAP" id="MF_01350">
    <property type="entry name" value="NDH1_NuoH"/>
    <property type="match status" value="1"/>
</dbReference>
<dbReference type="InterPro" id="IPR001694">
    <property type="entry name" value="NADH_UbQ_OxRdtase_su1/FPO"/>
</dbReference>
<dbReference type="InterPro" id="IPR018086">
    <property type="entry name" value="NADH_UbQ_OxRdtase_su1_CS"/>
</dbReference>
<dbReference type="NCBIfam" id="NF004741">
    <property type="entry name" value="PRK06076.1-2"/>
    <property type="match status" value="1"/>
</dbReference>
<dbReference type="PANTHER" id="PTHR11432">
    <property type="entry name" value="NADH DEHYDROGENASE SUBUNIT 1"/>
    <property type="match status" value="1"/>
</dbReference>
<dbReference type="PANTHER" id="PTHR11432:SF3">
    <property type="entry name" value="NADH-UBIQUINONE OXIDOREDUCTASE CHAIN 1"/>
    <property type="match status" value="1"/>
</dbReference>
<dbReference type="Pfam" id="PF00146">
    <property type="entry name" value="NADHdh"/>
    <property type="match status" value="1"/>
</dbReference>
<dbReference type="PROSITE" id="PS00667">
    <property type="entry name" value="COMPLEX1_ND1_1"/>
    <property type="match status" value="1"/>
</dbReference>
<keyword id="KW-0997">Cell inner membrane</keyword>
<keyword id="KW-1003">Cell membrane</keyword>
<keyword id="KW-0472">Membrane</keyword>
<keyword id="KW-0520">NAD</keyword>
<keyword id="KW-0874">Quinone</keyword>
<keyword id="KW-1185">Reference proteome</keyword>
<keyword id="KW-1278">Translocase</keyword>
<keyword id="KW-0812">Transmembrane</keyword>
<keyword id="KW-1133">Transmembrane helix</keyword>
<keyword id="KW-0830">Ubiquinone</keyword>
<proteinExistence type="inferred from homology"/>
<protein>
    <recommendedName>
        <fullName evidence="1">NADH-quinone oxidoreductase subunit H</fullName>
        <ecNumber evidence="1">7.1.1.-</ecNumber>
    </recommendedName>
    <alternativeName>
        <fullName evidence="1">NADH dehydrogenase I subunit H</fullName>
    </alternativeName>
    <alternativeName>
        <fullName evidence="1">NDH-1 subunit H</fullName>
    </alternativeName>
</protein>
<organism>
    <name type="scientific">Campylobacter hominis (strain ATCC BAA-381 / DSM 21671 / CCUG 45161 / LMG 19568 / NCTC 13146 / CH001A)</name>
    <dbReference type="NCBI Taxonomy" id="360107"/>
    <lineage>
        <taxon>Bacteria</taxon>
        <taxon>Pseudomonadati</taxon>
        <taxon>Campylobacterota</taxon>
        <taxon>Epsilonproteobacteria</taxon>
        <taxon>Campylobacterales</taxon>
        <taxon>Campylobacteraceae</taxon>
        <taxon>Campylobacter</taxon>
    </lineage>
</organism>
<feature type="chain" id="PRO_1000067738" description="NADH-quinone oxidoreductase subunit H">
    <location>
        <begin position="1"/>
        <end position="331"/>
    </location>
</feature>
<feature type="transmembrane region" description="Helical" evidence="1">
    <location>
        <begin position="6"/>
        <end position="26"/>
    </location>
</feature>
<feature type="transmembrane region" description="Helical" evidence="1">
    <location>
        <begin position="45"/>
        <end position="65"/>
    </location>
</feature>
<feature type="transmembrane region" description="Helical" evidence="1">
    <location>
        <begin position="78"/>
        <end position="98"/>
    </location>
</feature>
<feature type="transmembrane region" description="Helical" evidence="1">
    <location>
        <begin position="120"/>
        <end position="140"/>
    </location>
</feature>
<feature type="transmembrane region" description="Helical" evidence="1">
    <location>
        <begin position="167"/>
        <end position="187"/>
    </location>
</feature>
<feature type="transmembrane region" description="Helical" evidence="1">
    <location>
        <begin position="193"/>
        <end position="213"/>
    </location>
</feature>
<feature type="transmembrane region" description="Helical" evidence="1">
    <location>
        <begin position="241"/>
        <end position="261"/>
    </location>
</feature>
<feature type="transmembrane region" description="Helical" evidence="1">
    <location>
        <begin position="263"/>
        <end position="283"/>
    </location>
</feature>
<feature type="transmembrane region" description="Helical" evidence="1">
    <location>
        <begin position="311"/>
        <end position="331"/>
    </location>
</feature>
<accession>A7HZV5</accession>